<accession>A4SG46</accession>
<protein>
    <recommendedName>
        <fullName evidence="1">Tetraacyldisaccharide 4'-kinase</fullName>
        <ecNumber evidence="1">2.7.1.130</ecNumber>
    </recommendedName>
    <alternativeName>
        <fullName evidence="1">Lipid A 4'-kinase</fullName>
    </alternativeName>
</protein>
<evidence type="ECO:0000255" key="1">
    <source>
        <dbReference type="HAMAP-Rule" id="MF_00409"/>
    </source>
</evidence>
<organism>
    <name type="scientific">Chlorobium phaeovibrioides (strain DSM 265 / 1930)</name>
    <name type="common">Prosthecochloris vibrioformis (strain DSM 265)</name>
    <dbReference type="NCBI Taxonomy" id="290318"/>
    <lineage>
        <taxon>Bacteria</taxon>
        <taxon>Pseudomonadati</taxon>
        <taxon>Chlorobiota</taxon>
        <taxon>Chlorobiia</taxon>
        <taxon>Chlorobiales</taxon>
        <taxon>Chlorobiaceae</taxon>
        <taxon>Chlorobium/Pelodictyon group</taxon>
        <taxon>Chlorobium</taxon>
    </lineage>
</organism>
<reference key="1">
    <citation type="submission" date="2007-03" db="EMBL/GenBank/DDBJ databases">
        <title>Complete sequence of Prosthecochloris vibrioformis DSM 265.</title>
        <authorList>
            <consortium name="US DOE Joint Genome Institute"/>
            <person name="Copeland A."/>
            <person name="Lucas S."/>
            <person name="Lapidus A."/>
            <person name="Barry K."/>
            <person name="Detter J.C."/>
            <person name="Glavina del Rio T."/>
            <person name="Hammon N."/>
            <person name="Israni S."/>
            <person name="Pitluck S."/>
            <person name="Schmutz J."/>
            <person name="Larimer F."/>
            <person name="Land M."/>
            <person name="Hauser L."/>
            <person name="Mikhailova N."/>
            <person name="Li T."/>
            <person name="Overmann J."/>
            <person name="Schuster S.C."/>
            <person name="Bryant D.A."/>
            <person name="Richardson P."/>
        </authorList>
    </citation>
    <scope>NUCLEOTIDE SEQUENCE [LARGE SCALE GENOMIC DNA]</scope>
    <source>
        <strain>DSM 265 / 1930</strain>
    </source>
</reference>
<feature type="chain" id="PRO_1000080471" description="Tetraacyldisaccharide 4'-kinase">
    <location>
        <begin position="1"/>
        <end position="353"/>
    </location>
</feature>
<feature type="binding site" evidence="1">
    <location>
        <begin position="49"/>
        <end position="56"/>
    </location>
    <ligand>
        <name>ATP</name>
        <dbReference type="ChEBI" id="CHEBI:30616"/>
    </ligand>
</feature>
<gene>
    <name evidence="1" type="primary">lpxK</name>
    <name type="ordered locus">Cvib_1444</name>
</gene>
<keyword id="KW-0067">ATP-binding</keyword>
<keyword id="KW-0418">Kinase</keyword>
<keyword id="KW-0441">Lipid A biosynthesis</keyword>
<keyword id="KW-0444">Lipid biosynthesis</keyword>
<keyword id="KW-0443">Lipid metabolism</keyword>
<keyword id="KW-0547">Nucleotide-binding</keyword>
<keyword id="KW-0808">Transferase</keyword>
<sequence length="353" mass="39324">MHKRPLSILLRPLGLLYGLIAEIRNTLFETALLTPWRPPCPVVSIGNITAGGTGKTPMVDWTTKYFLSLGCRVAIISRGYGRLTKGVQMVSDGRHLLLSAREAGDETAMLAANNPEAIVVAAEKRKEGARFIQKTFENFPPDVIILDDAFQHRQMARDLDIVIVSASEPFFKARMLPEGRLREPLRNLARADIILLGKITDPDEADAIEHALTATGRPVLRTRVHTLGLEPVTDCSEESANTGVQLQALAFAGIAAPEEFLASLRRTGTDVRAHRFFRDHQPYTTETVRSLIREAKEKGLSLVTTEKDWFRLLGDPQLKELMEHAGCSYLKIETRLPEGEEKLRMALRDLVGR</sequence>
<name>LPXK_CHLPM</name>
<proteinExistence type="inferred from homology"/>
<dbReference type="EC" id="2.7.1.130" evidence="1"/>
<dbReference type="EMBL" id="CP000607">
    <property type="protein sequence ID" value="ABP37455.1"/>
    <property type="molecule type" value="Genomic_DNA"/>
</dbReference>
<dbReference type="SMR" id="A4SG46"/>
<dbReference type="STRING" id="290318.Cvib_1444"/>
<dbReference type="KEGG" id="pvi:Cvib_1444"/>
<dbReference type="eggNOG" id="COG1663">
    <property type="taxonomic scope" value="Bacteria"/>
</dbReference>
<dbReference type="HOGENOM" id="CLU_038816_6_0_10"/>
<dbReference type="OrthoDB" id="9766423at2"/>
<dbReference type="UniPathway" id="UPA00359">
    <property type="reaction ID" value="UER00482"/>
</dbReference>
<dbReference type="GO" id="GO:0005886">
    <property type="term" value="C:plasma membrane"/>
    <property type="evidence" value="ECO:0007669"/>
    <property type="project" value="TreeGrafter"/>
</dbReference>
<dbReference type="GO" id="GO:0005524">
    <property type="term" value="F:ATP binding"/>
    <property type="evidence" value="ECO:0007669"/>
    <property type="project" value="UniProtKB-UniRule"/>
</dbReference>
<dbReference type="GO" id="GO:0009029">
    <property type="term" value="F:tetraacyldisaccharide 4'-kinase activity"/>
    <property type="evidence" value="ECO:0007669"/>
    <property type="project" value="UniProtKB-UniRule"/>
</dbReference>
<dbReference type="GO" id="GO:0009245">
    <property type="term" value="P:lipid A biosynthetic process"/>
    <property type="evidence" value="ECO:0007669"/>
    <property type="project" value="UniProtKB-UniRule"/>
</dbReference>
<dbReference type="GO" id="GO:0009244">
    <property type="term" value="P:lipopolysaccharide core region biosynthetic process"/>
    <property type="evidence" value="ECO:0007669"/>
    <property type="project" value="TreeGrafter"/>
</dbReference>
<dbReference type="HAMAP" id="MF_00409">
    <property type="entry name" value="LpxK"/>
    <property type="match status" value="1"/>
</dbReference>
<dbReference type="InterPro" id="IPR003758">
    <property type="entry name" value="LpxK"/>
</dbReference>
<dbReference type="InterPro" id="IPR027417">
    <property type="entry name" value="P-loop_NTPase"/>
</dbReference>
<dbReference type="NCBIfam" id="TIGR00682">
    <property type="entry name" value="lpxK"/>
    <property type="match status" value="1"/>
</dbReference>
<dbReference type="PANTHER" id="PTHR42724">
    <property type="entry name" value="TETRAACYLDISACCHARIDE 4'-KINASE"/>
    <property type="match status" value="1"/>
</dbReference>
<dbReference type="PANTHER" id="PTHR42724:SF1">
    <property type="entry name" value="TETRAACYLDISACCHARIDE 4'-KINASE, MITOCHONDRIAL-RELATED"/>
    <property type="match status" value="1"/>
</dbReference>
<dbReference type="Pfam" id="PF02606">
    <property type="entry name" value="LpxK"/>
    <property type="match status" value="1"/>
</dbReference>
<dbReference type="SUPFAM" id="SSF52540">
    <property type="entry name" value="P-loop containing nucleoside triphosphate hydrolases"/>
    <property type="match status" value="1"/>
</dbReference>
<comment type="function">
    <text evidence="1">Transfers the gamma-phosphate of ATP to the 4'-position of a tetraacyldisaccharide 1-phosphate intermediate (termed DS-1-P) to form tetraacyldisaccharide 1,4'-bis-phosphate (lipid IVA).</text>
</comment>
<comment type="catalytic activity">
    <reaction evidence="1">
        <text>a lipid A disaccharide + ATP = a lipid IVA + ADP + H(+)</text>
        <dbReference type="Rhea" id="RHEA:67840"/>
        <dbReference type="ChEBI" id="CHEBI:15378"/>
        <dbReference type="ChEBI" id="CHEBI:30616"/>
        <dbReference type="ChEBI" id="CHEBI:176343"/>
        <dbReference type="ChEBI" id="CHEBI:176425"/>
        <dbReference type="ChEBI" id="CHEBI:456216"/>
        <dbReference type="EC" id="2.7.1.130"/>
    </reaction>
</comment>
<comment type="pathway">
    <text evidence="1">Glycolipid biosynthesis; lipid IV(A) biosynthesis; lipid IV(A) from (3R)-3-hydroxytetradecanoyl-[acyl-carrier-protein] and UDP-N-acetyl-alpha-D-glucosamine: step 6/6.</text>
</comment>
<comment type="similarity">
    <text evidence="1">Belongs to the LpxK family.</text>
</comment>